<proteinExistence type="inferred from homology"/>
<gene>
    <name evidence="1" type="primary">rplR</name>
    <name type="ordered locus">XF_1168</name>
</gene>
<organism>
    <name type="scientific">Xylella fastidiosa (strain 9a5c)</name>
    <dbReference type="NCBI Taxonomy" id="160492"/>
    <lineage>
        <taxon>Bacteria</taxon>
        <taxon>Pseudomonadati</taxon>
        <taxon>Pseudomonadota</taxon>
        <taxon>Gammaproteobacteria</taxon>
        <taxon>Lysobacterales</taxon>
        <taxon>Lysobacteraceae</taxon>
        <taxon>Xylella</taxon>
    </lineage>
</organism>
<accession>Q9PE60</accession>
<feature type="chain" id="PRO_0000131393" description="Large ribosomal subunit protein uL18">
    <location>
        <begin position="1"/>
        <end position="119"/>
    </location>
</feature>
<protein>
    <recommendedName>
        <fullName evidence="1">Large ribosomal subunit protein uL18</fullName>
    </recommendedName>
    <alternativeName>
        <fullName evidence="2">50S ribosomal protein L18</fullName>
    </alternativeName>
</protein>
<sequence length="119" mass="12924">MSIGKNVARLRRAKSTRVHIRKLGVPRLSVLRTGRHLYAQIFTADGSKVIAAANTLQSQVKDGLKNGKNSLAATKVGKLIAERAKAVGVDRIAFDRSGYLYHGRIKILADAARDAGLKF</sequence>
<evidence type="ECO:0000255" key="1">
    <source>
        <dbReference type="HAMAP-Rule" id="MF_01337"/>
    </source>
</evidence>
<evidence type="ECO:0000305" key="2"/>
<dbReference type="EMBL" id="AE003849">
    <property type="protein sequence ID" value="AAF83978.1"/>
    <property type="status" value="ALT_INIT"/>
    <property type="molecule type" value="Genomic_DNA"/>
</dbReference>
<dbReference type="PIR" id="A82714">
    <property type="entry name" value="A82714"/>
</dbReference>
<dbReference type="RefSeq" id="WP_004086538.1">
    <property type="nucleotide sequence ID" value="NC_002488.3"/>
</dbReference>
<dbReference type="SMR" id="Q9PE60"/>
<dbReference type="STRING" id="160492.XF_1168"/>
<dbReference type="KEGG" id="xfa:XF_1168"/>
<dbReference type="eggNOG" id="COG0256">
    <property type="taxonomic scope" value="Bacteria"/>
</dbReference>
<dbReference type="HOGENOM" id="CLU_098841_0_1_6"/>
<dbReference type="Proteomes" id="UP000000812">
    <property type="component" value="Chromosome"/>
</dbReference>
<dbReference type="GO" id="GO:0022625">
    <property type="term" value="C:cytosolic large ribosomal subunit"/>
    <property type="evidence" value="ECO:0007669"/>
    <property type="project" value="TreeGrafter"/>
</dbReference>
<dbReference type="GO" id="GO:0008097">
    <property type="term" value="F:5S rRNA binding"/>
    <property type="evidence" value="ECO:0007669"/>
    <property type="project" value="TreeGrafter"/>
</dbReference>
<dbReference type="GO" id="GO:0003735">
    <property type="term" value="F:structural constituent of ribosome"/>
    <property type="evidence" value="ECO:0007669"/>
    <property type="project" value="InterPro"/>
</dbReference>
<dbReference type="GO" id="GO:0006412">
    <property type="term" value="P:translation"/>
    <property type="evidence" value="ECO:0007669"/>
    <property type="project" value="UniProtKB-UniRule"/>
</dbReference>
<dbReference type="CDD" id="cd00432">
    <property type="entry name" value="Ribosomal_L18_L5e"/>
    <property type="match status" value="1"/>
</dbReference>
<dbReference type="FunFam" id="3.30.420.100:FF:000001">
    <property type="entry name" value="50S ribosomal protein L18"/>
    <property type="match status" value="1"/>
</dbReference>
<dbReference type="Gene3D" id="3.30.420.100">
    <property type="match status" value="1"/>
</dbReference>
<dbReference type="HAMAP" id="MF_01337_B">
    <property type="entry name" value="Ribosomal_uL18_B"/>
    <property type="match status" value="1"/>
</dbReference>
<dbReference type="InterPro" id="IPR004389">
    <property type="entry name" value="Ribosomal_uL18_bac-type"/>
</dbReference>
<dbReference type="InterPro" id="IPR005484">
    <property type="entry name" value="Ribosomal_uL18_bac/euk"/>
</dbReference>
<dbReference type="NCBIfam" id="TIGR00060">
    <property type="entry name" value="L18_bact"/>
    <property type="match status" value="1"/>
</dbReference>
<dbReference type="PANTHER" id="PTHR12899">
    <property type="entry name" value="39S RIBOSOMAL PROTEIN L18, MITOCHONDRIAL"/>
    <property type="match status" value="1"/>
</dbReference>
<dbReference type="PANTHER" id="PTHR12899:SF3">
    <property type="entry name" value="LARGE RIBOSOMAL SUBUNIT PROTEIN UL18M"/>
    <property type="match status" value="1"/>
</dbReference>
<dbReference type="Pfam" id="PF00861">
    <property type="entry name" value="Ribosomal_L18p"/>
    <property type="match status" value="1"/>
</dbReference>
<dbReference type="SUPFAM" id="SSF53137">
    <property type="entry name" value="Translational machinery components"/>
    <property type="match status" value="1"/>
</dbReference>
<keyword id="KW-0687">Ribonucleoprotein</keyword>
<keyword id="KW-0689">Ribosomal protein</keyword>
<keyword id="KW-0694">RNA-binding</keyword>
<keyword id="KW-0699">rRNA-binding</keyword>
<name>RL18_XYLFA</name>
<reference key="1">
    <citation type="journal article" date="2000" name="Nature">
        <title>The genome sequence of the plant pathogen Xylella fastidiosa.</title>
        <authorList>
            <person name="Simpson A.J.G."/>
            <person name="Reinach F.C."/>
            <person name="Arruda P."/>
            <person name="Abreu F.A."/>
            <person name="Acencio M."/>
            <person name="Alvarenga R."/>
            <person name="Alves L.M.C."/>
            <person name="Araya J.E."/>
            <person name="Baia G.S."/>
            <person name="Baptista C.S."/>
            <person name="Barros M.H."/>
            <person name="Bonaccorsi E.D."/>
            <person name="Bordin S."/>
            <person name="Bove J.M."/>
            <person name="Briones M.R.S."/>
            <person name="Bueno M.R.P."/>
            <person name="Camargo A.A."/>
            <person name="Camargo L.E.A."/>
            <person name="Carraro D.M."/>
            <person name="Carrer H."/>
            <person name="Colauto N.B."/>
            <person name="Colombo C."/>
            <person name="Costa F.F."/>
            <person name="Costa M.C.R."/>
            <person name="Costa-Neto C.M."/>
            <person name="Coutinho L.L."/>
            <person name="Cristofani M."/>
            <person name="Dias-Neto E."/>
            <person name="Docena C."/>
            <person name="El-Dorry H."/>
            <person name="Facincani A.P."/>
            <person name="Ferreira A.J.S."/>
            <person name="Ferreira V.C.A."/>
            <person name="Ferro J.A."/>
            <person name="Fraga J.S."/>
            <person name="Franca S.C."/>
            <person name="Franco M.C."/>
            <person name="Frohme M."/>
            <person name="Furlan L.R."/>
            <person name="Garnier M."/>
            <person name="Goldman G.H."/>
            <person name="Goldman M.H.S."/>
            <person name="Gomes S.L."/>
            <person name="Gruber A."/>
            <person name="Ho P.L."/>
            <person name="Hoheisel J.D."/>
            <person name="Junqueira M.L."/>
            <person name="Kemper E.L."/>
            <person name="Kitajima J.P."/>
            <person name="Krieger J.E."/>
            <person name="Kuramae E.E."/>
            <person name="Laigret F."/>
            <person name="Lambais M.R."/>
            <person name="Leite L.C.C."/>
            <person name="Lemos E.G.M."/>
            <person name="Lemos M.V.F."/>
            <person name="Lopes S.A."/>
            <person name="Lopes C.R."/>
            <person name="Machado J.A."/>
            <person name="Machado M.A."/>
            <person name="Madeira A.M.B.N."/>
            <person name="Madeira H.M.F."/>
            <person name="Marino C.L."/>
            <person name="Marques M.V."/>
            <person name="Martins E.A.L."/>
            <person name="Martins E.M.F."/>
            <person name="Matsukuma A.Y."/>
            <person name="Menck C.F.M."/>
            <person name="Miracca E.C."/>
            <person name="Miyaki C.Y."/>
            <person name="Monteiro-Vitorello C.B."/>
            <person name="Moon D.H."/>
            <person name="Nagai M.A."/>
            <person name="Nascimento A.L.T.O."/>
            <person name="Netto L.E.S."/>
            <person name="Nhani A. Jr."/>
            <person name="Nobrega F.G."/>
            <person name="Nunes L.R."/>
            <person name="Oliveira M.A."/>
            <person name="de Oliveira M.C."/>
            <person name="de Oliveira R.C."/>
            <person name="Palmieri D.A."/>
            <person name="Paris A."/>
            <person name="Peixoto B.R."/>
            <person name="Pereira G.A.G."/>
            <person name="Pereira H.A. Jr."/>
            <person name="Pesquero J.B."/>
            <person name="Quaggio R.B."/>
            <person name="Roberto P.G."/>
            <person name="Rodrigues V."/>
            <person name="de Rosa A.J.M."/>
            <person name="de Rosa V.E. Jr."/>
            <person name="de Sa R.G."/>
            <person name="Santelli R.V."/>
            <person name="Sawasaki H.E."/>
            <person name="da Silva A.C.R."/>
            <person name="da Silva A.M."/>
            <person name="da Silva F.R."/>
            <person name="Silva W.A. Jr."/>
            <person name="da Silveira J.F."/>
            <person name="Silvestri M.L.Z."/>
            <person name="Siqueira W.J."/>
            <person name="de Souza A.A."/>
            <person name="de Souza A.P."/>
            <person name="Terenzi M.F."/>
            <person name="Truffi D."/>
            <person name="Tsai S.M."/>
            <person name="Tsuhako M.H."/>
            <person name="Vallada H."/>
            <person name="Van Sluys M.A."/>
            <person name="Verjovski-Almeida S."/>
            <person name="Vettore A.L."/>
            <person name="Zago M.A."/>
            <person name="Zatz M."/>
            <person name="Meidanis J."/>
            <person name="Setubal J.C."/>
        </authorList>
    </citation>
    <scope>NUCLEOTIDE SEQUENCE [LARGE SCALE GENOMIC DNA]</scope>
    <source>
        <strain>9a5c</strain>
    </source>
</reference>
<comment type="function">
    <text evidence="1">This is one of the proteins that bind and probably mediate the attachment of the 5S RNA into the large ribosomal subunit, where it forms part of the central protuberance.</text>
</comment>
<comment type="subunit">
    <text evidence="1">Part of the 50S ribosomal subunit; part of the 5S rRNA/L5/L18/L25 subcomplex. Contacts the 5S and 23S rRNAs.</text>
</comment>
<comment type="similarity">
    <text evidence="1">Belongs to the universal ribosomal protein uL18 family.</text>
</comment>
<comment type="sequence caution" evidence="2">
    <conflict type="erroneous initiation">
        <sequence resource="EMBL-CDS" id="AAF83978"/>
    </conflict>
</comment>